<reference key="1">
    <citation type="journal article" date="2010" name="Genome Biol.">
        <title>Structure and dynamics of the pan-genome of Streptococcus pneumoniae and closely related species.</title>
        <authorList>
            <person name="Donati C."/>
            <person name="Hiller N.L."/>
            <person name="Tettelin H."/>
            <person name="Muzzi A."/>
            <person name="Croucher N.J."/>
            <person name="Angiuoli S.V."/>
            <person name="Oggioni M."/>
            <person name="Dunning Hotopp J.C."/>
            <person name="Hu F.Z."/>
            <person name="Riley D.R."/>
            <person name="Covacci A."/>
            <person name="Mitchell T.J."/>
            <person name="Bentley S.D."/>
            <person name="Kilian M."/>
            <person name="Ehrlich G.D."/>
            <person name="Rappuoli R."/>
            <person name="Moxon E.R."/>
            <person name="Masignani V."/>
        </authorList>
    </citation>
    <scope>NUCLEOTIDE SEQUENCE [LARGE SCALE GENOMIC DNA]</scope>
    <source>
        <strain>JJA</strain>
    </source>
</reference>
<proteinExistence type="inferred from homology"/>
<sequence length="162" mass="18499">MSDKIGLFTGSFDPMTNGHLDIIERASRLFDKLYVGIFFNPHKQGFLPLENRKRGLEKALGHLENVEVVASHDELVVDVAKRLGATCLVRGLRNASDLQYEASFDYYNHQLSSDIETIYLHSRPEHLYISSSGVRELLKFGRDIACYVPESILEEIRNEKKD</sequence>
<protein>
    <recommendedName>
        <fullName evidence="1">Phosphopantetheine adenylyltransferase</fullName>
        <ecNumber evidence="1">2.7.7.3</ecNumber>
    </recommendedName>
    <alternativeName>
        <fullName evidence="1">Dephospho-CoA pyrophosphorylase</fullName>
    </alternativeName>
    <alternativeName>
        <fullName evidence="1">Pantetheine-phosphate adenylyltransferase</fullName>
        <shortName evidence="1">PPAT</shortName>
    </alternativeName>
</protein>
<evidence type="ECO:0000255" key="1">
    <source>
        <dbReference type="HAMAP-Rule" id="MF_00151"/>
    </source>
</evidence>
<comment type="function">
    <text evidence="1">Reversibly transfers an adenylyl group from ATP to 4'-phosphopantetheine, yielding dephospho-CoA (dPCoA) and pyrophosphate.</text>
</comment>
<comment type="catalytic activity">
    <reaction evidence="1">
        <text>(R)-4'-phosphopantetheine + ATP + H(+) = 3'-dephospho-CoA + diphosphate</text>
        <dbReference type="Rhea" id="RHEA:19801"/>
        <dbReference type="ChEBI" id="CHEBI:15378"/>
        <dbReference type="ChEBI" id="CHEBI:30616"/>
        <dbReference type="ChEBI" id="CHEBI:33019"/>
        <dbReference type="ChEBI" id="CHEBI:57328"/>
        <dbReference type="ChEBI" id="CHEBI:61723"/>
        <dbReference type="EC" id="2.7.7.3"/>
    </reaction>
</comment>
<comment type="cofactor">
    <cofactor evidence="1">
        <name>Mg(2+)</name>
        <dbReference type="ChEBI" id="CHEBI:18420"/>
    </cofactor>
</comment>
<comment type="pathway">
    <text evidence="1">Cofactor biosynthesis; coenzyme A biosynthesis; CoA from (R)-pantothenate: step 4/5.</text>
</comment>
<comment type="subunit">
    <text evidence="1">Homohexamer.</text>
</comment>
<comment type="subcellular location">
    <subcellularLocation>
        <location evidence="1">Cytoplasm</location>
    </subcellularLocation>
</comment>
<comment type="similarity">
    <text evidence="1">Belongs to the bacterial CoaD family.</text>
</comment>
<feature type="chain" id="PRO_1000123305" description="Phosphopantetheine adenylyltransferase">
    <location>
        <begin position="1"/>
        <end position="162"/>
    </location>
</feature>
<feature type="binding site" evidence="1">
    <location>
        <begin position="11"/>
        <end position="12"/>
    </location>
    <ligand>
        <name>ATP</name>
        <dbReference type="ChEBI" id="CHEBI:30616"/>
    </ligand>
</feature>
<feature type="binding site" evidence="1">
    <location>
        <position position="11"/>
    </location>
    <ligand>
        <name>substrate</name>
    </ligand>
</feature>
<feature type="binding site" evidence="1">
    <location>
        <position position="19"/>
    </location>
    <ligand>
        <name>ATP</name>
        <dbReference type="ChEBI" id="CHEBI:30616"/>
    </ligand>
</feature>
<feature type="binding site" evidence="1">
    <location>
        <position position="43"/>
    </location>
    <ligand>
        <name>substrate</name>
    </ligand>
</feature>
<feature type="binding site" evidence="1">
    <location>
        <position position="76"/>
    </location>
    <ligand>
        <name>substrate</name>
    </ligand>
</feature>
<feature type="binding site" evidence="1">
    <location>
        <position position="90"/>
    </location>
    <ligand>
        <name>substrate</name>
    </ligand>
</feature>
<feature type="binding site" evidence="1">
    <location>
        <begin position="91"/>
        <end position="93"/>
    </location>
    <ligand>
        <name>ATP</name>
        <dbReference type="ChEBI" id="CHEBI:30616"/>
    </ligand>
</feature>
<feature type="binding site" evidence="1">
    <location>
        <position position="101"/>
    </location>
    <ligand>
        <name>ATP</name>
        <dbReference type="ChEBI" id="CHEBI:30616"/>
    </ligand>
</feature>
<feature type="binding site" evidence="1">
    <location>
        <begin position="126"/>
        <end position="132"/>
    </location>
    <ligand>
        <name>ATP</name>
        <dbReference type="ChEBI" id="CHEBI:30616"/>
    </ligand>
</feature>
<feature type="site" description="Transition state stabilizer" evidence="1">
    <location>
        <position position="19"/>
    </location>
</feature>
<accession>C1CGQ1</accession>
<name>COAD_STRZJ</name>
<keyword id="KW-0067">ATP-binding</keyword>
<keyword id="KW-0173">Coenzyme A biosynthesis</keyword>
<keyword id="KW-0963">Cytoplasm</keyword>
<keyword id="KW-0460">Magnesium</keyword>
<keyword id="KW-0547">Nucleotide-binding</keyword>
<keyword id="KW-0548">Nucleotidyltransferase</keyword>
<keyword id="KW-0808">Transferase</keyword>
<dbReference type="EC" id="2.7.7.3" evidence="1"/>
<dbReference type="EMBL" id="CP000919">
    <property type="protein sequence ID" value="ACO18292.1"/>
    <property type="molecule type" value="Genomic_DNA"/>
</dbReference>
<dbReference type="RefSeq" id="WP_001280740.1">
    <property type="nucleotide sequence ID" value="NC_012466.1"/>
</dbReference>
<dbReference type="SMR" id="C1CGQ1"/>
<dbReference type="KEGG" id="sjj:SPJ_1962"/>
<dbReference type="HOGENOM" id="CLU_100149_0_1_9"/>
<dbReference type="UniPathway" id="UPA00241">
    <property type="reaction ID" value="UER00355"/>
</dbReference>
<dbReference type="Proteomes" id="UP000002206">
    <property type="component" value="Chromosome"/>
</dbReference>
<dbReference type="GO" id="GO:0005737">
    <property type="term" value="C:cytoplasm"/>
    <property type="evidence" value="ECO:0007669"/>
    <property type="project" value="UniProtKB-SubCell"/>
</dbReference>
<dbReference type="GO" id="GO:0005524">
    <property type="term" value="F:ATP binding"/>
    <property type="evidence" value="ECO:0007669"/>
    <property type="project" value="UniProtKB-KW"/>
</dbReference>
<dbReference type="GO" id="GO:0004595">
    <property type="term" value="F:pantetheine-phosphate adenylyltransferase activity"/>
    <property type="evidence" value="ECO:0007669"/>
    <property type="project" value="UniProtKB-UniRule"/>
</dbReference>
<dbReference type="GO" id="GO:0015937">
    <property type="term" value="P:coenzyme A biosynthetic process"/>
    <property type="evidence" value="ECO:0007669"/>
    <property type="project" value="UniProtKB-UniRule"/>
</dbReference>
<dbReference type="CDD" id="cd02163">
    <property type="entry name" value="PPAT"/>
    <property type="match status" value="1"/>
</dbReference>
<dbReference type="Gene3D" id="3.40.50.620">
    <property type="entry name" value="HUPs"/>
    <property type="match status" value="1"/>
</dbReference>
<dbReference type="HAMAP" id="MF_00151">
    <property type="entry name" value="PPAT_bact"/>
    <property type="match status" value="1"/>
</dbReference>
<dbReference type="InterPro" id="IPR004821">
    <property type="entry name" value="Cyt_trans-like"/>
</dbReference>
<dbReference type="InterPro" id="IPR001980">
    <property type="entry name" value="PPAT"/>
</dbReference>
<dbReference type="InterPro" id="IPR014729">
    <property type="entry name" value="Rossmann-like_a/b/a_fold"/>
</dbReference>
<dbReference type="NCBIfam" id="TIGR01510">
    <property type="entry name" value="coaD_prev_kdtB"/>
    <property type="match status" value="1"/>
</dbReference>
<dbReference type="NCBIfam" id="TIGR00125">
    <property type="entry name" value="cyt_tran_rel"/>
    <property type="match status" value="1"/>
</dbReference>
<dbReference type="PANTHER" id="PTHR21342">
    <property type="entry name" value="PHOSPHOPANTETHEINE ADENYLYLTRANSFERASE"/>
    <property type="match status" value="1"/>
</dbReference>
<dbReference type="PANTHER" id="PTHR21342:SF1">
    <property type="entry name" value="PHOSPHOPANTETHEINE ADENYLYLTRANSFERASE"/>
    <property type="match status" value="1"/>
</dbReference>
<dbReference type="Pfam" id="PF01467">
    <property type="entry name" value="CTP_transf_like"/>
    <property type="match status" value="1"/>
</dbReference>
<dbReference type="PRINTS" id="PR01020">
    <property type="entry name" value="LPSBIOSNTHSS"/>
</dbReference>
<dbReference type="SUPFAM" id="SSF52374">
    <property type="entry name" value="Nucleotidylyl transferase"/>
    <property type="match status" value="1"/>
</dbReference>
<gene>
    <name evidence="1" type="primary">coaD</name>
    <name type="ordered locus">SPJ_1962</name>
</gene>
<organism>
    <name type="scientific">Streptococcus pneumoniae (strain JJA)</name>
    <dbReference type="NCBI Taxonomy" id="488222"/>
    <lineage>
        <taxon>Bacteria</taxon>
        <taxon>Bacillati</taxon>
        <taxon>Bacillota</taxon>
        <taxon>Bacilli</taxon>
        <taxon>Lactobacillales</taxon>
        <taxon>Streptococcaceae</taxon>
        <taxon>Streptococcus</taxon>
    </lineage>
</organism>